<organism>
    <name type="scientific">Rattus norvegicus</name>
    <name type="common">Rat</name>
    <dbReference type="NCBI Taxonomy" id="10116"/>
    <lineage>
        <taxon>Eukaryota</taxon>
        <taxon>Metazoa</taxon>
        <taxon>Chordata</taxon>
        <taxon>Craniata</taxon>
        <taxon>Vertebrata</taxon>
        <taxon>Euteleostomi</taxon>
        <taxon>Mammalia</taxon>
        <taxon>Eutheria</taxon>
        <taxon>Euarchontoglires</taxon>
        <taxon>Glires</taxon>
        <taxon>Rodentia</taxon>
        <taxon>Myomorpha</taxon>
        <taxon>Muroidea</taxon>
        <taxon>Muridae</taxon>
        <taxon>Murinae</taxon>
        <taxon>Rattus</taxon>
    </lineage>
</organism>
<name>CNKR3_RAT</name>
<feature type="chain" id="PRO_0000311107" description="Connector enhancer of kinase suppressor of ras 3">
    <location>
        <begin position="1"/>
        <end position="555"/>
    </location>
</feature>
<feature type="domain" description="SAM" evidence="4">
    <location>
        <begin position="7"/>
        <end position="72"/>
    </location>
</feature>
<feature type="domain" description="CRIC" evidence="5">
    <location>
        <begin position="80"/>
        <end position="174"/>
    </location>
</feature>
<feature type="domain" description="PDZ" evidence="3">
    <location>
        <begin position="211"/>
        <end position="293"/>
    </location>
</feature>
<feature type="domain" description="DUF1170">
    <location>
        <begin position="325"/>
        <end position="546"/>
    </location>
</feature>
<feature type="region of interest" description="Disordered" evidence="6">
    <location>
        <begin position="308"/>
        <end position="333"/>
    </location>
</feature>
<feature type="region of interest" description="Disordered" evidence="6">
    <location>
        <begin position="348"/>
        <end position="391"/>
    </location>
</feature>
<feature type="region of interest" description="Disordered" evidence="6">
    <location>
        <begin position="518"/>
        <end position="538"/>
    </location>
</feature>
<feature type="compositionally biased region" description="Low complexity" evidence="6">
    <location>
        <begin position="311"/>
        <end position="329"/>
    </location>
</feature>
<feature type="modified residue" description="Phosphoserine" evidence="2">
    <location>
        <position position="381"/>
    </location>
</feature>
<feature type="modified residue" description="Phosphoserine" evidence="8">
    <location>
        <position position="383"/>
    </location>
</feature>
<feature type="sequence conflict" description="In Ref. 2; AAR01114." evidence="7" ref="2">
    <original>D</original>
    <variation>Y</variation>
    <location>
        <position position="358"/>
    </location>
</feature>
<feature type="sequence conflict" description="In Ref. 2; AAR01114." evidence="7" ref="2">
    <original>K</original>
    <variation>KG</variation>
    <location>
        <position position="456"/>
    </location>
</feature>
<proteinExistence type="evidence at protein level"/>
<gene>
    <name type="primary">Cnksr3</name>
    <name type="synonym">Prp4</name>
</gene>
<accession>Q5SGD7</accession>
<accession>Q6VPP2</accession>
<sequence length="555" mass="61851">MEPVTKWSPKQVVDWTRGLDDCLQPYVHKFEREKIDGEQLLKISHQDLEELGVTRIGHQELVLEAVDLLCALNYGLETDNMKNLVLKLRASSHNLQNYISSRRKSPAYDGNTSRKPPNEFLTSVVELIGAAKALLAWLDRAPFTGITDLSVTKNKIIQLCLDLTTAVQKDCLVAEMEDKVLNVVKVLNGICDKMMHSTTDPVMSQCACLEEVHLPNVRPGEGLGMYIKSTYDGLHVITGTTENSPADRSQKIHAGDEVIQVNRQTVVGWQLKNLVKKLRENPTGVVLLLKKRPTGSFSFTPAPLKNLRWKPPLVQTSPPPTTTQSPESTMDASLKKEKPAILDLYIPPPPAVPYSPRDENVSFSYRGHTKSKQPLPGRKGSESPNSFLDQESQRRRFTITDSDQLPGYSVGTNILPIKMRGKTPSYGKPRPLSMPADGNWMGIVDPFAKPRGHGRKGEDALCRYFSNERITPIIEESASPVYRFSRPLTERHLVRGADYIRGSRCYINSDLHSSATIPFQEEGPKKKSASSSAKASSGEPSLLVSWLTRLKLLTH</sequence>
<protein>
    <recommendedName>
        <fullName>Connector enhancer of kinase suppressor of ras 3</fullName>
        <shortName>Connector enhancer of KSR 3</shortName>
    </recommendedName>
    <alternativeName>
        <fullName>CNK homolog protein 3</fullName>
        <shortName>CNK3</shortName>
    </alternativeName>
    <alternativeName>
        <fullName>Maguin-like protein</fullName>
    </alternativeName>
    <alternativeName>
        <fullName>Parturition-related protein 4</fullName>
    </alternativeName>
</protein>
<dbReference type="EMBL" id="AY328890">
    <property type="protein sequence ID" value="AAQ92305.1"/>
    <property type="molecule type" value="mRNA"/>
</dbReference>
<dbReference type="EMBL" id="AY333962">
    <property type="protein sequence ID" value="AAR01114.1"/>
    <property type="status" value="ALT_INIT"/>
    <property type="molecule type" value="mRNA"/>
</dbReference>
<dbReference type="RefSeq" id="NP_001012061.1">
    <property type="nucleotide sequence ID" value="NM_001012061.1"/>
</dbReference>
<dbReference type="SMR" id="Q5SGD7"/>
<dbReference type="BioGRID" id="258906">
    <property type="interactions" value="1"/>
</dbReference>
<dbReference type="FunCoup" id="Q5SGD7">
    <property type="interactions" value="324"/>
</dbReference>
<dbReference type="STRING" id="10116.ENSRNOP00000024418"/>
<dbReference type="iPTMnet" id="Q5SGD7"/>
<dbReference type="PhosphoSitePlus" id="Q5SGD7"/>
<dbReference type="PaxDb" id="10116-ENSRNOP00000024418"/>
<dbReference type="Ensembl" id="ENSRNOT00000082931.2">
    <property type="protein sequence ID" value="ENSRNOP00000070619.2"/>
    <property type="gene ID" value="ENSRNOG00000018052.8"/>
</dbReference>
<dbReference type="GeneID" id="308113"/>
<dbReference type="KEGG" id="rno:308113"/>
<dbReference type="UCSC" id="RGD:1307544">
    <property type="organism name" value="rat"/>
</dbReference>
<dbReference type="AGR" id="RGD:1307544"/>
<dbReference type="CTD" id="154043"/>
<dbReference type="RGD" id="1307544">
    <property type="gene designation" value="Cnksr3"/>
</dbReference>
<dbReference type="eggNOG" id="KOG1738">
    <property type="taxonomic scope" value="Eukaryota"/>
</dbReference>
<dbReference type="GeneTree" id="ENSGT00940000154428"/>
<dbReference type="InParanoid" id="Q5SGD7"/>
<dbReference type="OMA" id="VTRWSPK"/>
<dbReference type="OrthoDB" id="34690at9989"/>
<dbReference type="PhylomeDB" id="Q5SGD7"/>
<dbReference type="TreeFam" id="TF326495"/>
<dbReference type="PRO" id="PR:Q5SGD7"/>
<dbReference type="Proteomes" id="UP000002494">
    <property type="component" value="Chromosome 1"/>
</dbReference>
<dbReference type="Bgee" id="ENSRNOG00000018052">
    <property type="expression patterns" value="Expressed in cerebellum and 19 other cell types or tissues"/>
</dbReference>
<dbReference type="ExpressionAtlas" id="Q5SGD7">
    <property type="expression patterns" value="baseline and differential"/>
</dbReference>
<dbReference type="GO" id="GO:0016324">
    <property type="term" value="C:apical plasma membrane"/>
    <property type="evidence" value="ECO:0007669"/>
    <property type="project" value="UniProtKB-SubCell"/>
</dbReference>
<dbReference type="GO" id="GO:0005737">
    <property type="term" value="C:cytoplasm"/>
    <property type="evidence" value="ECO:0007669"/>
    <property type="project" value="UniProtKB-SubCell"/>
</dbReference>
<dbReference type="GO" id="GO:0070373">
    <property type="term" value="P:negative regulation of ERK1 and ERK2 cascade"/>
    <property type="evidence" value="ECO:0000250"/>
    <property type="project" value="UniProtKB"/>
</dbReference>
<dbReference type="GO" id="GO:0033137">
    <property type="term" value="P:negative regulation of peptidyl-serine phosphorylation"/>
    <property type="evidence" value="ECO:0000250"/>
    <property type="project" value="UniProtKB"/>
</dbReference>
<dbReference type="GO" id="GO:0010765">
    <property type="term" value="P:positive regulation of sodium ion transport"/>
    <property type="evidence" value="ECO:0000250"/>
    <property type="project" value="UniProtKB"/>
</dbReference>
<dbReference type="GO" id="GO:0050808">
    <property type="term" value="P:synapse organization"/>
    <property type="evidence" value="ECO:0007669"/>
    <property type="project" value="UniProtKB-ARBA"/>
</dbReference>
<dbReference type="CDD" id="cd06748">
    <property type="entry name" value="PDZ_CNK1_2_3-like"/>
    <property type="match status" value="1"/>
</dbReference>
<dbReference type="CDD" id="cd09511">
    <property type="entry name" value="SAM_CNK1_2_3-suppressor"/>
    <property type="match status" value="1"/>
</dbReference>
<dbReference type="FunFam" id="1.10.150.50:FF:000019">
    <property type="entry name" value="Connector enhancer of kinase suppressor of Ras 2"/>
    <property type="match status" value="1"/>
</dbReference>
<dbReference type="FunFam" id="2.30.42.10:FF:000060">
    <property type="entry name" value="Connector enhancer of kinase suppressor of Ras 2"/>
    <property type="match status" value="1"/>
</dbReference>
<dbReference type="Gene3D" id="2.30.42.10">
    <property type="match status" value="1"/>
</dbReference>
<dbReference type="Gene3D" id="1.10.150.50">
    <property type="entry name" value="Transcription Factor, Ets-1"/>
    <property type="match status" value="1"/>
</dbReference>
<dbReference type="InterPro" id="IPR049628">
    <property type="entry name" value="CNK1-3_SAM"/>
</dbReference>
<dbReference type="InterPro" id="IPR010599">
    <property type="entry name" value="CNK2/3_dom"/>
</dbReference>
<dbReference type="InterPro" id="IPR051566">
    <property type="entry name" value="CNKSR"/>
</dbReference>
<dbReference type="InterPro" id="IPR017874">
    <property type="entry name" value="CRIC_domain"/>
</dbReference>
<dbReference type="InterPro" id="IPR001478">
    <property type="entry name" value="PDZ"/>
</dbReference>
<dbReference type="InterPro" id="IPR036034">
    <property type="entry name" value="PDZ_sf"/>
</dbReference>
<dbReference type="InterPro" id="IPR001660">
    <property type="entry name" value="SAM"/>
</dbReference>
<dbReference type="InterPro" id="IPR013761">
    <property type="entry name" value="SAM/pointed_sf"/>
</dbReference>
<dbReference type="PANTHER" id="PTHR12844">
    <property type="entry name" value="CONNECTOR ENCHANCER OF KINASE SUPPRESSOR OF RAS"/>
    <property type="match status" value="1"/>
</dbReference>
<dbReference type="PANTHER" id="PTHR12844:SF17">
    <property type="entry name" value="CONNECTOR ENHANCER OF KINASE SUPPRESSOR OF RAS 3"/>
    <property type="match status" value="1"/>
</dbReference>
<dbReference type="Pfam" id="PF06663">
    <property type="entry name" value="CNK2_3_dom"/>
    <property type="match status" value="1"/>
</dbReference>
<dbReference type="Pfam" id="PF10534">
    <property type="entry name" value="CRIC_ras_sig"/>
    <property type="match status" value="1"/>
</dbReference>
<dbReference type="Pfam" id="PF00595">
    <property type="entry name" value="PDZ"/>
    <property type="match status" value="1"/>
</dbReference>
<dbReference type="Pfam" id="PF00536">
    <property type="entry name" value="SAM_1"/>
    <property type="match status" value="1"/>
</dbReference>
<dbReference type="SMART" id="SM00228">
    <property type="entry name" value="PDZ"/>
    <property type="match status" value="1"/>
</dbReference>
<dbReference type="SMART" id="SM00454">
    <property type="entry name" value="SAM"/>
    <property type="match status" value="1"/>
</dbReference>
<dbReference type="SUPFAM" id="SSF50156">
    <property type="entry name" value="PDZ domain-like"/>
    <property type="match status" value="1"/>
</dbReference>
<dbReference type="SUPFAM" id="SSF47769">
    <property type="entry name" value="SAM/Pointed domain"/>
    <property type="match status" value="1"/>
</dbReference>
<dbReference type="PROSITE" id="PS51290">
    <property type="entry name" value="CRIC"/>
    <property type="match status" value="1"/>
</dbReference>
<dbReference type="PROSITE" id="PS50106">
    <property type="entry name" value="PDZ"/>
    <property type="match status" value="1"/>
</dbReference>
<dbReference type="PROSITE" id="PS50105">
    <property type="entry name" value="SAM_DOMAIN"/>
    <property type="match status" value="1"/>
</dbReference>
<keyword id="KW-1003">Cell membrane</keyword>
<keyword id="KW-0963">Cytoplasm</keyword>
<keyword id="KW-0472">Membrane</keyword>
<keyword id="KW-0597">Phosphoprotein</keyword>
<keyword id="KW-1185">Reference proteome</keyword>
<evidence type="ECO:0000250" key="1">
    <source>
        <dbReference type="UniProtKB" id="Q6P9H4"/>
    </source>
</evidence>
<evidence type="ECO:0000250" key="2">
    <source>
        <dbReference type="UniProtKB" id="Q8BMA3"/>
    </source>
</evidence>
<evidence type="ECO:0000255" key="3">
    <source>
        <dbReference type="PROSITE-ProRule" id="PRU00143"/>
    </source>
</evidence>
<evidence type="ECO:0000255" key="4">
    <source>
        <dbReference type="PROSITE-ProRule" id="PRU00184"/>
    </source>
</evidence>
<evidence type="ECO:0000255" key="5">
    <source>
        <dbReference type="PROSITE-ProRule" id="PRU00621"/>
    </source>
</evidence>
<evidence type="ECO:0000256" key="6">
    <source>
        <dbReference type="SAM" id="MobiDB-lite"/>
    </source>
</evidence>
<evidence type="ECO:0000305" key="7"/>
<evidence type="ECO:0007744" key="8">
    <source>
    </source>
</evidence>
<comment type="function">
    <text evidence="1">Involved in transepithelial sodium transport. Regulates aldosterone-induced and epithelial sodium channel (ENaC)-mediated sodium transport through regulation of ENaC cell surface expression. Acts as a scaffold protein coordinating the assembly of an ENaC-regulatory complex (ERC).</text>
</comment>
<comment type="subunit">
    <text evidence="1">Interacts with epithelial sodium channel ENaC. Interacts directly with SCNN1A (ENaC subunit alpha) and SCNN1B (ENaC subunit beta) C-terminal tails. Interacts with ENaC regulatory proteins NEDD4L, RAF1 and SGK1.</text>
</comment>
<comment type="subcellular location">
    <subcellularLocation>
        <location evidence="1">Cytoplasm</location>
    </subcellularLocation>
    <subcellularLocation>
        <location evidence="1">Apical cell membrane</location>
        <topology evidence="1">Peripheral membrane protein</topology>
    </subcellularLocation>
</comment>
<comment type="domain">
    <text evidence="1">The PDZ domain is required for interaction with ENaC and SGK1, but not for interaction with NEDDL4 and RAF1.</text>
</comment>
<comment type="similarity">
    <text evidence="7">Belongs to the CNKSR family.</text>
</comment>
<comment type="sequence caution" evidence="7">
    <conflict type="erroneous initiation">
        <sequence resource="EMBL-CDS" id="AAR01114"/>
    </conflict>
</comment>
<reference key="1">
    <citation type="submission" date="2003-06" db="EMBL/GenBank/DDBJ databases">
        <title>Cloning, expression and comparison of human, rat and mouse ML (maguin-like) genes, and expression in mouse oogenesis.</title>
        <authorList>
            <person name="Tzolovsky G.I."/>
            <person name="McGurk L."/>
            <person name="Pathirana S."/>
            <person name="Slee R."/>
            <person name="Hillier S."/>
            <person name="Clinton M."/>
            <person name="Bownes M."/>
        </authorList>
    </citation>
    <scope>NUCLEOTIDE SEQUENCE [MRNA]</scope>
    <source>
        <strain>Brown Norway</strain>
    </source>
</reference>
<reference key="2">
    <citation type="submission" date="2003-07" db="EMBL/GenBank/DDBJ databases">
        <authorList>
            <person name="Song J."/>
            <person name="Huang Z."/>
            <person name="Yue Z."/>
            <person name="Myatt L."/>
            <person name="Ma R.Z."/>
        </authorList>
    </citation>
    <scope>NUCLEOTIDE SEQUENCE [MRNA] OF 285-555</scope>
    <source>
        <tissue>Uterus</tissue>
    </source>
</reference>
<reference key="3">
    <citation type="journal article" date="2012" name="Nat. Commun.">
        <title>Quantitative maps of protein phosphorylation sites across 14 different rat organs and tissues.</title>
        <authorList>
            <person name="Lundby A."/>
            <person name="Secher A."/>
            <person name="Lage K."/>
            <person name="Nordsborg N.B."/>
            <person name="Dmytriyev A."/>
            <person name="Lundby C."/>
            <person name="Olsen J.V."/>
        </authorList>
    </citation>
    <scope>PHOSPHORYLATION [LARGE SCALE ANALYSIS] AT SER-383</scope>
    <scope>IDENTIFICATION BY MASS SPECTROMETRY [LARGE SCALE ANALYSIS]</scope>
</reference>